<gene>
    <name evidence="1" type="primary">recX</name>
    <name type="ordered locus">BCAH820_0497</name>
</gene>
<protein>
    <recommendedName>
        <fullName evidence="1">Regulatory protein RecX</fullName>
    </recommendedName>
</protein>
<organism>
    <name type="scientific">Bacillus cereus (strain AH820)</name>
    <dbReference type="NCBI Taxonomy" id="405535"/>
    <lineage>
        <taxon>Bacteria</taxon>
        <taxon>Bacillati</taxon>
        <taxon>Bacillota</taxon>
        <taxon>Bacilli</taxon>
        <taxon>Bacillales</taxon>
        <taxon>Bacillaceae</taxon>
        <taxon>Bacillus</taxon>
        <taxon>Bacillus cereus group</taxon>
    </lineage>
</organism>
<accession>B7JNE9</accession>
<dbReference type="EMBL" id="CP001283">
    <property type="protein sequence ID" value="ACK91322.1"/>
    <property type="molecule type" value="Genomic_DNA"/>
</dbReference>
<dbReference type="RefSeq" id="WP_000268518.1">
    <property type="nucleotide sequence ID" value="NC_011773.1"/>
</dbReference>
<dbReference type="SMR" id="B7JNE9"/>
<dbReference type="GeneID" id="45020565"/>
<dbReference type="KEGG" id="bcu:BCAH820_0497"/>
<dbReference type="HOGENOM" id="CLU_066607_4_0_9"/>
<dbReference type="Proteomes" id="UP000001363">
    <property type="component" value="Chromosome"/>
</dbReference>
<dbReference type="GO" id="GO:0005737">
    <property type="term" value="C:cytoplasm"/>
    <property type="evidence" value="ECO:0007669"/>
    <property type="project" value="UniProtKB-SubCell"/>
</dbReference>
<dbReference type="GO" id="GO:0006282">
    <property type="term" value="P:regulation of DNA repair"/>
    <property type="evidence" value="ECO:0007669"/>
    <property type="project" value="UniProtKB-UniRule"/>
</dbReference>
<dbReference type="Gene3D" id="1.10.10.10">
    <property type="entry name" value="Winged helix-like DNA-binding domain superfamily/Winged helix DNA-binding domain"/>
    <property type="match status" value="4"/>
</dbReference>
<dbReference type="HAMAP" id="MF_01114">
    <property type="entry name" value="RecX"/>
    <property type="match status" value="1"/>
</dbReference>
<dbReference type="InterPro" id="IPR053926">
    <property type="entry name" value="RecX_HTH_1st"/>
</dbReference>
<dbReference type="InterPro" id="IPR053924">
    <property type="entry name" value="RecX_HTH_2nd"/>
</dbReference>
<dbReference type="InterPro" id="IPR053925">
    <property type="entry name" value="RecX_HTH_3rd"/>
</dbReference>
<dbReference type="InterPro" id="IPR003783">
    <property type="entry name" value="Regulatory_RecX"/>
</dbReference>
<dbReference type="InterPro" id="IPR036388">
    <property type="entry name" value="WH-like_DNA-bd_sf"/>
</dbReference>
<dbReference type="NCBIfam" id="NF010733">
    <property type="entry name" value="PRK14135.1"/>
    <property type="match status" value="1"/>
</dbReference>
<dbReference type="PANTHER" id="PTHR33602">
    <property type="entry name" value="REGULATORY PROTEIN RECX FAMILY PROTEIN"/>
    <property type="match status" value="1"/>
</dbReference>
<dbReference type="PANTHER" id="PTHR33602:SF1">
    <property type="entry name" value="REGULATORY PROTEIN RECX FAMILY PROTEIN"/>
    <property type="match status" value="1"/>
</dbReference>
<dbReference type="Pfam" id="PF21982">
    <property type="entry name" value="RecX_HTH1"/>
    <property type="match status" value="1"/>
</dbReference>
<dbReference type="Pfam" id="PF02631">
    <property type="entry name" value="RecX_HTH2"/>
    <property type="match status" value="1"/>
</dbReference>
<dbReference type="Pfam" id="PF21981">
    <property type="entry name" value="RecX_HTH3"/>
    <property type="match status" value="2"/>
</dbReference>
<proteinExistence type="inferred from homology"/>
<feature type="chain" id="PRO_1000137151" description="Regulatory protein RecX">
    <location>
        <begin position="1"/>
        <end position="270"/>
    </location>
</feature>
<comment type="function">
    <text evidence="1">Modulates RecA activity.</text>
</comment>
<comment type="subcellular location">
    <subcellularLocation>
        <location evidence="1">Cytoplasm</location>
    </subcellularLocation>
</comment>
<comment type="similarity">
    <text evidence="1">Belongs to the RecX family.</text>
</comment>
<reference key="1">
    <citation type="submission" date="2008-10" db="EMBL/GenBank/DDBJ databases">
        <title>Genome sequence of Bacillus cereus AH820.</title>
        <authorList>
            <person name="Dodson R.J."/>
            <person name="Durkin A.S."/>
            <person name="Rosovitz M.J."/>
            <person name="Rasko D.A."/>
            <person name="Hoffmaster A."/>
            <person name="Ravel J."/>
            <person name="Sutton G."/>
        </authorList>
    </citation>
    <scope>NUCLEOTIDE SEQUENCE [LARGE SCALE GENOMIC DNA]</scope>
    <source>
        <strain>AH820</strain>
    </source>
</reference>
<evidence type="ECO:0000255" key="1">
    <source>
        <dbReference type="HAMAP-Rule" id="MF_01114"/>
    </source>
</evidence>
<name>RECX_BACC0</name>
<sequence length="270" mass="32139">MAVITKIEVQKRSKERFNIYIDKGQGEEYGFSVNEVILIKHGLQKGLEIDEIALGNILYNEEVQKAYLQAISYLSYQMRTKLEIEDFLRKKEVGQAIISEVVSKLLHDRYINDKEYAILYTRTQSNVNRKGPTVIKRELLNKGVQDLIIMHSLQEYTKEKQIENALILIEKKKKSYQKHSFLQMKLKLDEMLVRKGYSRDVIQICLEELKDEKDDEKQQEALHYHGNKYYEKYKKYDGWTFENKMKQALYRKGFSIDEIEIFLQMKREEG</sequence>
<keyword id="KW-0963">Cytoplasm</keyword>